<sequence>MPEIKIFHNPRCSKSRAALSLLEERGIAAEVVKYLDTPPDLSELKDIFNKLGLASARGMMRVKDDLYKELGLDNPNLDNDALLRAIADHPALLERPIVLANGKAAVGRPLENIEAVL</sequence>
<accession>P63621</accession>
<accession>A1IP98</accession>
<accession>Q9JQU0</accession>
<gene>
    <name type="primary">arsC</name>
    <name type="ordered locus">NMA0252</name>
</gene>
<evidence type="ECO:0000250" key="1">
    <source>
        <dbReference type="UniProtKB" id="P08692"/>
    </source>
</evidence>
<evidence type="ECO:0000255" key="2">
    <source>
        <dbReference type="PROSITE-ProRule" id="PRU01282"/>
    </source>
</evidence>
<evidence type="ECO:0000305" key="3"/>
<feature type="chain" id="PRO_0000162541" description="Arsenate reductase">
    <location>
        <begin position="1"/>
        <end position="117"/>
    </location>
</feature>
<feature type="active site" description="Nucleophile; cysteine thioarsenate intermediate" evidence="1 2">
    <location>
        <position position="12"/>
    </location>
</feature>
<feature type="site" description="Important for activity" evidence="1">
    <location>
        <position position="8"/>
    </location>
</feature>
<feature type="site" description="Important for activity" evidence="1">
    <location>
        <position position="61"/>
    </location>
</feature>
<feature type="site" description="Important for activity" evidence="1">
    <location>
        <position position="95"/>
    </location>
</feature>
<feature type="site" description="Important for activity" evidence="1">
    <location>
        <position position="108"/>
    </location>
</feature>
<comment type="function">
    <text evidence="1">Involved in resistance to arsenate. Catalyzes the reduction of arsenate [As(V)] to arsenite [As(III)].</text>
</comment>
<comment type="catalytic activity">
    <reaction evidence="1">
        <text>[glutaredoxin]-dithiol + arsenate + glutathione + H(+) = glutathionyl-S-S-[glutaredoxin] + arsenite + H2O</text>
        <dbReference type="Rhea" id="RHEA:22016"/>
        <dbReference type="Rhea" id="RHEA-COMP:10729"/>
        <dbReference type="Rhea" id="RHEA-COMP:17668"/>
        <dbReference type="ChEBI" id="CHEBI:15377"/>
        <dbReference type="ChEBI" id="CHEBI:15378"/>
        <dbReference type="ChEBI" id="CHEBI:29242"/>
        <dbReference type="ChEBI" id="CHEBI:29950"/>
        <dbReference type="ChEBI" id="CHEBI:48597"/>
        <dbReference type="ChEBI" id="CHEBI:57925"/>
        <dbReference type="ChEBI" id="CHEBI:146199"/>
        <dbReference type="EC" id="1.20.4.1"/>
    </reaction>
</comment>
<comment type="similarity">
    <text evidence="3">Belongs to the ArsC family.</text>
</comment>
<protein>
    <recommendedName>
        <fullName>Arsenate reductase</fullName>
        <ecNumber evidence="1">1.20.4.1</ecNumber>
    </recommendedName>
</protein>
<keyword id="KW-0059">Arsenical resistance</keyword>
<keyword id="KW-0560">Oxidoreductase</keyword>
<dbReference type="EC" id="1.20.4.1" evidence="1"/>
<dbReference type="EMBL" id="AL157959">
    <property type="protein sequence ID" value="CAM07558.1"/>
    <property type="molecule type" value="Genomic_DNA"/>
</dbReference>
<dbReference type="RefSeq" id="WP_002225750.1">
    <property type="nucleotide sequence ID" value="NC_003116.1"/>
</dbReference>
<dbReference type="SMR" id="P63621"/>
<dbReference type="EnsemblBacteria" id="CAM07558">
    <property type="protein sequence ID" value="CAM07558"/>
    <property type="gene ID" value="NMA0252"/>
</dbReference>
<dbReference type="GeneID" id="93387097"/>
<dbReference type="KEGG" id="nma:NMA0252"/>
<dbReference type="HOGENOM" id="CLU_116644_0_1_4"/>
<dbReference type="Proteomes" id="UP000000626">
    <property type="component" value="Chromosome"/>
</dbReference>
<dbReference type="GO" id="GO:0008794">
    <property type="term" value="F:arsenate reductase (glutaredoxin) activity"/>
    <property type="evidence" value="ECO:0007669"/>
    <property type="project" value="UniProtKB-EC"/>
</dbReference>
<dbReference type="GO" id="GO:0046685">
    <property type="term" value="P:response to arsenic-containing substance"/>
    <property type="evidence" value="ECO:0007669"/>
    <property type="project" value="UniProtKB-KW"/>
</dbReference>
<dbReference type="CDD" id="cd03034">
    <property type="entry name" value="ArsC_ArsC"/>
    <property type="match status" value="1"/>
</dbReference>
<dbReference type="Gene3D" id="3.40.30.10">
    <property type="entry name" value="Glutaredoxin"/>
    <property type="match status" value="1"/>
</dbReference>
<dbReference type="InterPro" id="IPR006659">
    <property type="entry name" value="Arsenate_reductase"/>
</dbReference>
<dbReference type="InterPro" id="IPR006660">
    <property type="entry name" value="Arsenate_reductase-like"/>
</dbReference>
<dbReference type="InterPro" id="IPR036249">
    <property type="entry name" value="Thioredoxin-like_sf"/>
</dbReference>
<dbReference type="NCBIfam" id="TIGR00014">
    <property type="entry name" value="arsC"/>
    <property type="match status" value="1"/>
</dbReference>
<dbReference type="PANTHER" id="PTHR30041">
    <property type="entry name" value="ARSENATE REDUCTASE"/>
    <property type="match status" value="1"/>
</dbReference>
<dbReference type="PANTHER" id="PTHR30041:SF4">
    <property type="entry name" value="ARSENATE REDUCTASE"/>
    <property type="match status" value="1"/>
</dbReference>
<dbReference type="Pfam" id="PF03960">
    <property type="entry name" value="ArsC"/>
    <property type="match status" value="1"/>
</dbReference>
<dbReference type="SUPFAM" id="SSF52833">
    <property type="entry name" value="Thioredoxin-like"/>
    <property type="match status" value="1"/>
</dbReference>
<dbReference type="PROSITE" id="PS51353">
    <property type="entry name" value="ARSC"/>
    <property type="match status" value="1"/>
</dbReference>
<proteinExistence type="inferred from homology"/>
<name>ARSC_NEIMA</name>
<organism>
    <name type="scientific">Neisseria meningitidis serogroup A / serotype 4A (strain DSM 15465 / Z2491)</name>
    <dbReference type="NCBI Taxonomy" id="122587"/>
    <lineage>
        <taxon>Bacteria</taxon>
        <taxon>Pseudomonadati</taxon>
        <taxon>Pseudomonadota</taxon>
        <taxon>Betaproteobacteria</taxon>
        <taxon>Neisseriales</taxon>
        <taxon>Neisseriaceae</taxon>
        <taxon>Neisseria</taxon>
    </lineage>
</organism>
<reference key="1">
    <citation type="journal article" date="2000" name="Nature">
        <title>Complete DNA sequence of a serogroup A strain of Neisseria meningitidis Z2491.</title>
        <authorList>
            <person name="Parkhill J."/>
            <person name="Achtman M."/>
            <person name="James K.D."/>
            <person name="Bentley S.D."/>
            <person name="Churcher C.M."/>
            <person name="Klee S.R."/>
            <person name="Morelli G."/>
            <person name="Basham D."/>
            <person name="Brown D."/>
            <person name="Chillingworth T."/>
            <person name="Davies R.M."/>
            <person name="Davis P."/>
            <person name="Devlin K."/>
            <person name="Feltwell T."/>
            <person name="Hamlin N."/>
            <person name="Holroyd S."/>
            <person name="Jagels K."/>
            <person name="Leather S."/>
            <person name="Moule S."/>
            <person name="Mungall K.L."/>
            <person name="Quail M.A."/>
            <person name="Rajandream M.A."/>
            <person name="Rutherford K.M."/>
            <person name="Simmonds M."/>
            <person name="Skelton J."/>
            <person name="Whitehead S."/>
            <person name="Spratt B.G."/>
            <person name="Barrell B.G."/>
        </authorList>
    </citation>
    <scope>NUCLEOTIDE SEQUENCE [LARGE SCALE GENOMIC DNA]</scope>
    <source>
        <strain>DSM 15465 / Z2491</strain>
    </source>
</reference>